<accession>Q7W670</accession>
<organism>
    <name type="scientific">Bordetella parapertussis (strain 12822 / ATCC BAA-587 / NCTC 13253)</name>
    <dbReference type="NCBI Taxonomy" id="257311"/>
    <lineage>
        <taxon>Bacteria</taxon>
        <taxon>Pseudomonadati</taxon>
        <taxon>Pseudomonadota</taxon>
        <taxon>Betaproteobacteria</taxon>
        <taxon>Burkholderiales</taxon>
        <taxon>Alcaligenaceae</taxon>
        <taxon>Bordetella</taxon>
    </lineage>
</organism>
<keyword id="KW-0963">Cytoplasm</keyword>
<keyword id="KW-0378">Hydrolase</keyword>
<keyword id="KW-0479">Metal-binding</keyword>
<keyword id="KW-0547">Nucleotide-binding</keyword>
<proteinExistence type="inferred from homology"/>
<feature type="chain" id="PRO_0000111791" description="5'-nucleotidase SurE">
    <location>
        <begin position="1"/>
        <end position="252"/>
    </location>
</feature>
<feature type="binding site" evidence="1">
    <location>
        <position position="8"/>
    </location>
    <ligand>
        <name>a divalent metal cation</name>
        <dbReference type="ChEBI" id="CHEBI:60240"/>
    </ligand>
</feature>
<feature type="binding site" evidence="1">
    <location>
        <position position="9"/>
    </location>
    <ligand>
        <name>a divalent metal cation</name>
        <dbReference type="ChEBI" id="CHEBI:60240"/>
    </ligand>
</feature>
<feature type="binding site" evidence="1">
    <location>
        <position position="39"/>
    </location>
    <ligand>
        <name>a divalent metal cation</name>
        <dbReference type="ChEBI" id="CHEBI:60240"/>
    </ligand>
</feature>
<feature type="binding site" evidence="1">
    <location>
        <position position="91"/>
    </location>
    <ligand>
        <name>a divalent metal cation</name>
        <dbReference type="ChEBI" id="CHEBI:60240"/>
    </ligand>
</feature>
<gene>
    <name evidence="1" type="primary">surE</name>
    <name type="ordered locus">BPP3057</name>
</gene>
<dbReference type="EC" id="3.1.3.5" evidence="1"/>
<dbReference type="EMBL" id="BX640432">
    <property type="protein sequence ID" value="CAE38344.1"/>
    <property type="molecule type" value="Genomic_DNA"/>
</dbReference>
<dbReference type="RefSeq" id="WP_003811017.1">
    <property type="nucleotide sequence ID" value="NC_002928.3"/>
</dbReference>
<dbReference type="SMR" id="Q7W670"/>
<dbReference type="GeneID" id="93204839"/>
<dbReference type="KEGG" id="bpa:BPP3057"/>
<dbReference type="HOGENOM" id="CLU_045192_1_2_4"/>
<dbReference type="Proteomes" id="UP000001421">
    <property type="component" value="Chromosome"/>
</dbReference>
<dbReference type="GO" id="GO:0005737">
    <property type="term" value="C:cytoplasm"/>
    <property type="evidence" value="ECO:0007669"/>
    <property type="project" value="UniProtKB-SubCell"/>
</dbReference>
<dbReference type="GO" id="GO:0008254">
    <property type="term" value="F:3'-nucleotidase activity"/>
    <property type="evidence" value="ECO:0007669"/>
    <property type="project" value="TreeGrafter"/>
</dbReference>
<dbReference type="GO" id="GO:0008253">
    <property type="term" value="F:5'-nucleotidase activity"/>
    <property type="evidence" value="ECO:0007669"/>
    <property type="project" value="UniProtKB-UniRule"/>
</dbReference>
<dbReference type="GO" id="GO:0004309">
    <property type="term" value="F:exopolyphosphatase activity"/>
    <property type="evidence" value="ECO:0007669"/>
    <property type="project" value="TreeGrafter"/>
</dbReference>
<dbReference type="GO" id="GO:0046872">
    <property type="term" value="F:metal ion binding"/>
    <property type="evidence" value="ECO:0007669"/>
    <property type="project" value="UniProtKB-UniRule"/>
</dbReference>
<dbReference type="GO" id="GO:0000166">
    <property type="term" value="F:nucleotide binding"/>
    <property type="evidence" value="ECO:0007669"/>
    <property type="project" value="UniProtKB-KW"/>
</dbReference>
<dbReference type="FunFam" id="3.40.1210.10:FF:000001">
    <property type="entry name" value="5'/3'-nucleotidase SurE"/>
    <property type="match status" value="1"/>
</dbReference>
<dbReference type="Gene3D" id="3.40.1210.10">
    <property type="entry name" value="Survival protein SurE-like phosphatase/nucleotidase"/>
    <property type="match status" value="1"/>
</dbReference>
<dbReference type="HAMAP" id="MF_00060">
    <property type="entry name" value="SurE"/>
    <property type="match status" value="1"/>
</dbReference>
<dbReference type="InterPro" id="IPR030048">
    <property type="entry name" value="SurE"/>
</dbReference>
<dbReference type="InterPro" id="IPR002828">
    <property type="entry name" value="SurE-like_Pase/nucleotidase"/>
</dbReference>
<dbReference type="InterPro" id="IPR036523">
    <property type="entry name" value="SurE-like_sf"/>
</dbReference>
<dbReference type="NCBIfam" id="NF001489">
    <property type="entry name" value="PRK00346.1-3"/>
    <property type="match status" value="1"/>
</dbReference>
<dbReference type="NCBIfam" id="NF001490">
    <property type="entry name" value="PRK00346.1-4"/>
    <property type="match status" value="1"/>
</dbReference>
<dbReference type="NCBIfam" id="TIGR00087">
    <property type="entry name" value="surE"/>
    <property type="match status" value="1"/>
</dbReference>
<dbReference type="PANTHER" id="PTHR30457">
    <property type="entry name" value="5'-NUCLEOTIDASE SURE"/>
    <property type="match status" value="1"/>
</dbReference>
<dbReference type="PANTHER" id="PTHR30457:SF12">
    <property type="entry name" value="5'_3'-NUCLEOTIDASE SURE"/>
    <property type="match status" value="1"/>
</dbReference>
<dbReference type="Pfam" id="PF01975">
    <property type="entry name" value="SurE"/>
    <property type="match status" value="1"/>
</dbReference>
<dbReference type="SUPFAM" id="SSF64167">
    <property type="entry name" value="SurE-like"/>
    <property type="match status" value="1"/>
</dbReference>
<comment type="function">
    <text evidence="1">Nucleotidase that shows phosphatase activity on nucleoside 5'-monophosphates.</text>
</comment>
<comment type="catalytic activity">
    <reaction evidence="1">
        <text>a ribonucleoside 5'-phosphate + H2O = a ribonucleoside + phosphate</text>
        <dbReference type="Rhea" id="RHEA:12484"/>
        <dbReference type="ChEBI" id="CHEBI:15377"/>
        <dbReference type="ChEBI" id="CHEBI:18254"/>
        <dbReference type="ChEBI" id="CHEBI:43474"/>
        <dbReference type="ChEBI" id="CHEBI:58043"/>
        <dbReference type="EC" id="3.1.3.5"/>
    </reaction>
</comment>
<comment type="cofactor">
    <cofactor evidence="1">
        <name>a divalent metal cation</name>
        <dbReference type="ChEBI" id="CHEBI:60240"/>
    </cofactor>
    <text evidence="1">Binds 1 divalent metal cation per subunit.</text>
</comment>
<comment type="subcellular location">
    <subcellularLocation>
        <location evidence="1">Cytoplasm</location>
    </subcellularLocation>
</comment>
<comment type="similarity">
    <text evidence="1">Belongs to the SurE nucleotidase family.</text>
</comment>
<protein>
    <recommendedName>
        <fullName evidence="1">5'-nucleotidase SurE</fullName>
        <ecNumber evidence="1">3.1.3.5</ecNumber>
    </recommendedName>
    <alternativeName>
        <fullName evidence="1">Nucleoside 5'-monophosphate phosphohydrolase</fullName>
    </alternativeName>
</protein>
<evidence type="ECO:0000255" key="1">
    <source>
        <dbReference type="HAMAP-Rule" id="MF_00060"/>
    </source>
</evidence>
<name>SURE_BORPA</name>
<sequence length="252" mass="26817">MRILVSNDDGYNAPGLEALVEALSGLGELTVVAPETNHSGASNSLTLNRPLTVRTASNGFIYVNGTPSDCVHVALTGLMDARPDLVVSGINNGANMGDDTLYSGTVAAASEGYLFGIPSIAFSLIEKGWQHIESAARAARQVVERQIAQPLAAPVLLNVNIPNRRYEDMKGYAVTRLGKRHPSEPVVRTTTPYGDTVYWIGPVGLAADATPGTDFHATAQGQVSVTPLRLDLTQHSQLDDVRNWAEPLCVNA</sequence>
<reference key="1">
    <citation type="journal article" date="2003" name="Nat. Genet.">
        <title>Comparative analysis of the genome sequences of Bordetella pertussis, Bordetella parapertussis and Bordetella bronchiseptica.</title>
        <authorList>
            <person name="Parkhill J."/>
            <person name="Sebaihia M."/>
            <person name="Preston A."/>
            <person name="Murphy L.D."/>
            <person name="Thomson N.R."/>
            <person name="Harris D.E."/>
            <person name="Holden M.T.G."/>
            <person name="Churcher C.M."/>
            <person name="Bentley S.D."/>
            <person name="Mungall K.L."/>
            <person name="Cerdeno-Tarraga A.-M."/>
            <person name="Temple L."/>
            <person name="James K.D."/>
            <person name="Harris B."/>
            <person name="Quail M.A."/>
            <person name="Achtman M."/>
            <person name="Atkin R."/>
            <person name="Baker S."/>
            <person name="Basham D."/>
            <person name="Bason N."/>
            <person name="Cherevach I."/>
            <person name="Chillingworth T."/>
            <person name="Collins M."/>
            <person name="Cronin A."/>
            <person name="Davis P."/>
            <person name="Doggett J."/>
            <person name="Feltwell T."/>
            <person name="Goble A."/>
            <person name="Hamlin N."/>
            <person name="Hauser H."/>
            <person name="Holroyd S."/>
            <person name="Jagels K."/>
            <person name="Leather S."/>
            <person name="Moule S."/>
            <person name="Norberczak H."/>
            <person name="O'Neil S."/>
            <person name="Ormond D."/>
            <person name="Price C."/>
            <person name="Rabbinowitsch E."/>
            <person name="Rutter S."/>
            <person name="Sanders M."/>
            <person name="Saunders D."/>
            <person name="Seeger K."/>
            <person name="Sharp S."/>
            <person name="Simmonds M."/>
            <person name="Skelton J."/>
            <person name="Squares R."/>
            <person name="Squares S."/>
            <person name="Stevens K."/>
            <person name="Unwin L."/>
            <person name="Whitehead S."/>
            <person name="Barrell B.G."/>
            <person name="Maskell D.J."/>
        </authorList>
    </citation>
    <scope>NUCLEOTIDE SEQUENCE [LARGE SCALE GENOMIC DNA]</scope>
    <source>
        <strain>12822 / ATCC BAA-587 / NCTC 13253</strain>
    </source>
</reference>